<keyword id="KW-0002">3D-structure</keyword>
<keyword id="KW-0963">Cytoplasm</keyword>
<keyword id="KW-0903">Direct protein sequencing</keyword>
<keyword id="KW-1185">Reference proteome</keyword>
<keyword id="KW-0687">Ribonucleoprotein</keyword>
<keyword id="KW-0689">Ribosomal protein</keyword>
<keyword id="KW-0690">Ribosome biogenesis</keyword>
<dbReference type="EMBL" id="X02635">
    <property type="protein sequence ID" value="CAA26482.1"/>
    <property type="molecule type" value="Genomic_DNA"/>
</dbReference>
<dbReference type="EMBL" id="X95258">
    <property type="protein sequence ID" value="CAA64549.1"/>
    <property type="molecule type" value="Genomic_DNA"/>
</dbReference>
<dbReference type="EMBL" id="Z74863">
    <property type="protein sequence ID" value="CAA99140.1"/>
    <property type="molecule type" value="Genomic_DNA"/>
</dbReference>
<dbReference type="EMBL" id="BK006948">
    <property type="protein sequence ID" value="DAA10663.1"/>
    <property type="molecule type" value="Genomic_DNA"/>
</dbReference>
<dbReference type="PIR" id="S05868">
    <property type="entry name" value="R3BY9E"/>
</dbReference>
<dbReference type="RefSeq" id="NP_014520.1">
    <property type="nucleotide sequence ID" value="NM_001183375.1"/>
</dbReference>
<dbReference type="PDB" id="3J6X">
    <property type="method" value="EM"/>
    <property type="resolution" value="6.10 A"/>
    <property type="chains" value="19=1-144"/>
</dbReference>
<dbReference type="PDB" id="3J6Y">
    <property type="method" value="EM"/>
    <property type="resolution" value="6.10 A"/>
    <property type="chains" value="19=1-144"/>
</dbReference>
<dbReference type="PDB" id="3J77">
    <property type="method" value="EM"/>
    <property type="resolution" value="6.20 A"/>
    <property type="chains" value="19=1-144"/>
</dbReference>
<dbReference type="PDB" id="3J78">
    <property type="method" value="EM"/>
    <property type="resolution" value="6.30 A"/>
    <property type="chains" value="19=1-144"/>
</dbReference>
<dbReference type="PDB" id="4U3M">
    <property type="method" value="X-ray"/>
    <property type="resolution" value="3.00 A"/>
    <property type="chains" value="C9/c9=2-144"/>
</dbReference>
<dbReference type="PDB" id="4U3N">
    <property type="method" value="X-ray"/>
    <property type="resolution" value="3.20 A"/>
    <property type="chains" value="C9/c9=2-144"/>
</dbReference>
<dbReference type="PDB" id="4U3U">
    <property type="method" value="X-ray"/>
    <property type="resolution" value="2.90 A"/>
    <property type="chains" value="C9/c9=2-144"/>
</dbReference>
<dbReference type="PDB" id="4U4N">
    <property type="method" value="X-ray"/>
    <property type="resolution" value="3.10 A"/>
    <property type="chains" value="C9/c9=2-144"/>
</dbReference>
<dbReference type="PDB" id="4U4O">
    <property type="method" value="X-ray"/>
    <property type="resolution" value="3.60 A"/>
    <property type="chains" value="C9/c9=2-144"/>
</dbReference>
<dbReference type="PDB" id="4U4Q">
    <property type="method" value="X-ray"/>
    <property type="resolution" value="3.00 A"/>
    <property type="chains" value="C9/c9=2-144"/>
</dbReference>
<dbReference type="PDB" id="4U4R">
    <property type="method" value="X-ray"/>
    <property type="resolution" value="2.80 A"/>
    <property type="chains" value="C9/c9=2-144"/>
</dbReference>
<dbReference type="PDB" id="4U4U">
    <property type="method" value="X-ray"/>
    <property type="resolution" value="3.00 A"/>
    <property type="chains" value="C9/c9=2-144"/>
</dbReference>
<dbReference type="PDB" id="4U4Y">
    <property type="method" value="X-ray"/>
    <property type="resolution" value="3.20 A"/>
    <property type="chains" value="C9/c9=2-144"/>
</dbReference>
<dbReference type="PDB" id="4U4Z">
    <property type="method" value="X-ray"/>
    <property type="resolution" value="3.10 A"/>
    <property type="chains" value="C9/c9=2-144"/>
</dbReference>
<dbReference type="PDB" id="4U50">
    <property type="method" value="X-ray"/>
    <property type="resolution" value="3.20 A"/>
    <property type="chains" value="C9/c9=2-144"/>
</dbReference>
<dbReference type="PDB" id="4U51">
    <property type="method" value="X-ray"/>
    <property type="resolution" value="3.20 A"/>
    <property type="chains" value="C9/c9=2-144"/>
</dbReference>
<dbReference type="PDB" id="4U52">
    <property type="method" value="X-ray"/>
    <property type="resolution" value="3.00 A"/>
    <property type="chains" value="C9/c9=2-144"/>
</dbReference>
<dbReference type="PDB" id="4U53">
    <property type="method" value="X-ray"/>
    <property type="resolution" value="3.30 A"/>
    <property type="chains" value="C9/c9=2-144"/>
</dbReference>
<dbReference type="PDB" id="4U55">
    <property type="method" value="X-ray"/>
    <property type="resolution" value="3.20 A"/>
    <property type="chains" value="C9/c9=2-144"/>
</dbReference>
<dbReference type="PDB" id="4U56">
    <property type="method" value="X-ray"/>
    <property type="resolution" value="3.45 A"/>
    <property type="chains" value="C9/c9=2-144"/>
</dbReference>
<dbReference type="PDB" id="4U6F">
    <property type="method" value="X-ray"/>
    <property type="resolution" value="3.10 A"/>
    <property type="chains" value="C9/c9=2-144"/>
</dbReference>
<dbReference type="PDB" id="4V6I">
    <property type="method" value="EM"/>
    <property type="resolution" value="8.80 A"/>
    <property type="chains" value="AS=1-144"/>
</dbReference>
<dbReference type="PDB" id="4V7R">
    <property type="method" value="X-ray"/>
    <property type="resolution" value="4.00 A"/>
    <property type="chains" value="AM/CM=1-144"/>
</dbReference>
<dbReference type="PDB" id="4V88">
    <property type="method" value="X-ray"/>
    <property type="resolution" value="3.00 A"/>
    <property type="chains" value="AT/CT=1-144"/>
</dbReference>
<dbReference type="PDB" id="4V8Y">
    <property type="method" value="EM"/>
    <property type="resolution" value="4.30 A"/>
    <property type="chains" value="AT=1-144"/>
</dbReference>
<dbReference type="PDB" id="4V8Z">
    <property type="method" value="EM"/>
    <property type="resolution" value="6.60 A"/>
    <property type="chains" value="AT=1-144"/>
</dbReference>
<dbReference type="PDB" id="4V92">
    <property type="method" value="EM"/>
    <property type="resolution" value="3.70 A"/>
    <property type="chains" value="T=3-144"/>
</dbReference>
<dbReference type="PDB" id="5DAT">
    <property type="method" value="X-ray"/>
    <property type="resolution" value="3.15 A"/>
    <property type="chains" value="C9/c9=2-144"/>
</dbReference>
<dbReference type="PDB" id="5DC3">
    <property type="method" value="X-ray"/>
    <property type="resolution" value="3.25 A"/>
    <property type="chains" value="C9/c9=2-144"/>
</dbReference>
<dbReference type="PDB" id="5DGE">
    <property type="method" value="X-ray"/>
    <property type="resolution" value="3.45 A"/>
    <property type="chains" value="C9/c9=2-144"/>
</dbReference>
<dbReference type="PDB" id="5DGF">
    <property type="method" value="X-ray"/>
    <property type="resolution" value="3.30 A"/>
    <property type="chains" value="C9/c9=2-144"/>
</dbReference>
<dbReference type="PDB" id="5DGV">
    <property type="method" value="X-ray"/>
    <property type="resolution" value="3.10 A"/>
    <property type="chains" value="C9/c9=2-144"/>
</dbReference>
<dbReference type="PDB" id="5FCI">
    <property type="method" value="X-ray"/>
    <property type="resolution" value="3.40 A"/>
    <property type="chains" value="C9/c9=2-144"/>
</dbReference>
<dbReference type="PDB" id="5FCJ">
    <property type="method" value="X-ray"/>
    <property type="resolution" value="3.10 A"/>
    <property type="chains" value="C9/c9=2-144"/>
</dbReference>
<dbReference type="PDB" id="5I4L">
    <property type="method" value="X-ray"/>
    <property type="resolution" value="3.10 A"/>
    <property type="chains" value="C9/c9=2-144"/>
</dbReference>
<dbReference type="PDB" id="5JUO">
    <property type="method" value="EM"/>
    <property type="resolution" value="4.00 A"/>
    <property type="chains" value="QB=1-144"/>
</dbReference>
<dbReference type="PDB" id="5JUP">
    <property type="method" value="EM"/>
    <property type="resolution" value="3.50 A"/>
    <property type="chains" value="QB=1-144"/>
</dbReference>
<dbReference type="PDB" id="5JUS">
    <property type="method" value="EM"/>
    <property type="resolution" value="4.20 A"/>
    <property type="chains" value="QB=1-144"/>
</dbReference>
<dbReference type="PDB" id="5JUT">
    <property type="method" value="EM"/>
    <property type="resolution" value="4.00 A"/>
    <property type="chains" value="QB=1-144"/>
</dbReference>
<dbReference type="PDB" id="5JUU">
    <property type="method" value="EM"/>
    <property type="resolution" value="4.00 A"/>
    <property type="chains" value="QB=1-144"/>
</dbReference>
<dbReference type="PDB" id="5LYB">
    <property type="method" value="X-ray"/>
    <property type="resolution" value="3.25 A"/>
    <property type="chains" value="C9/c9=2-144"/>
</dbReference>
<dbReference type="PDB" id="5M1J">
    <property type="method" value="EM"/>
    <property type="resolution" value="3.30 A"/>
    <property type="chains" value="T2=2-144"/>
</dbReference>
<dbReference type="PDB" id="5MC6">
    <property type="method" value="EM"/>
    <property type="resolution" value="3.80 A"/>
    <property type="chains" value="I=1-144"/>
</dbReference>
<dbReference type="PDB" id="5MEI">
    <property type="method" value="X-ray"/>
    <property type="resolution" value="3.50 A"/>
    <property type="chains" value="U/c9=2-144"/>
</dbReference>
<dbReference type="PDB" id="5NDG">
    <property type="method" value="X-ray"/>
    <property type="resolution" value="3.70 A"/>
    <property type="chains" value="C9/c9=2-144"/>
</dbReference>
<dbReference type="PDB" id="5NDV">
    <property type="method" value="X-ray"/>
    <property type="resolution" value="3.30 A"/>
    <property type="chains" value="C9/c9=2-144"/>
</dbReference>
<dbReference type="PDB" id="5NDW">
    <property type="method" value="X-ray"/>
    <property type="resolution" value="3.70 A"/>
    <property type="chains" value="C9/c9=2-144"/>
</dbReference>
<dbReference type="PDB" id="5OBM">
    <property type="method" value="X-ray"/>
    <property type="resolution" value="3.40 A"/>
    <property type="chains" value="C9/c9=2-144"/>
</dbReference>
<dbReference type="PDB" id="5ON6">
    <property type="method" value="X-ray"/>
    <property type="resolution" value="3.10 A"/>
    <property type="chains" value="U/c9=2-144"/>
</dbReference>
<dbReference type="PDB" id="5TBW">
    <property type="method" value="X-ray"/>
    <property type="resolution" value="3.00 A"/>
    <property type="chains" value="U/c9=2-144"/>
</dbReference>
<dbReference type="PDB" id="5TGA">
    <property type="method" value="X-ray"/>
    <property type="resolution" value="3.30 A"/>
    <property type="chains" value="C9/c9=2-144"/>
</dbReference>
<dbReference type="PDB" id="5TGM">
    <property type="method" value="X-ray"/>
    <property type="resolution" value="3.50 A"/>
    <property type="chains" value="C9/c9=2-144"/>
</dbReference>
<dbReference type="PDB" id="6EML">
    <property type="method" value="EM"/>
    <property type="resolution" value="3.60 A"/>
    <property type="chains" value="I=1-144"/>
</dbReference>
<dbReference type="PDB" id="6FAI">
    <property type="method" value="EM"/>
    <property type="resolution" value="3.40 A"/>
    <property type="chains" value="T=1-144"/>
</dbReference>
<dbReference type="PDB" id="6GQ1">
    <property type="method" value="EM"/>
    <property type="resolution" value="4.40 A"/>
    <property type="chains" value="AJ=2-144"/>
</dbReference>
<dbReference type="PDB" id="6GQB">
    <property type="method" value="EM"/>
    <property type="resolution" value="3.90 A"/>
    <property type="chains" value="AJ=2-144"/>
</dbReference>
<dbReference type="PDB" id="6GQV">
    <property type="method" value="EM"/>
    <property type="resolution" value="4.00 A"/>
    <property type="chains" value="AJ=2-144"/>
</dbReference>
<dbReference type="PDB" id="6HHQ">
    <property type="method" value="X-ray"/>
    <property type="resolution" value="3.10 A"/>
    <property type="chains" value="U/c9=1-144"/>
</dbReference>
<dbReference type="PDB" id="6I7O">
    <property type="method" value="EM"/>
    <property type="resolution" value="5.30 A"/>
    <property type="chains" value="I/Ib=2-144"/>
</dbReference>
<dbReference type="PDB" id="6Q8Y">
    <property type="method" value="EM"/>
    <property type="resolution" value="3.10 A"/>
    <property type="chains" value="I=2-144"/>
</dbReference>
<dbReference type="PDB" id="6RBD">
    <property type="method" value="EM"/>
    <property type="resolution" value="3.47 A"/>
    <property type="chains" value="T=1-144"/>
</dbReference>
<dbReference type="PDB" id="6RBE">
    <property type="method" value="EM"/>
    <property type="resolution" value="3.80 A"/>
    <property type="chains" value="T=1-144"/>
</dbReference>
<dbReference type="PDB" id="6S47">
    <property type="method" value="EM"/>
    <property type="resolution" value="3.28 A"/>
    <property type="chains" value="BU=2-144"/>
</dbReference>
<dbReference type="PDB" id="6SNT">
    <property type="method" value="EM"/>
    <property type="resolution" value="2.80 A"/>
    <property type="chains" value="T=1-144"/>
</dbReference>
<dbReference type="PDB" id="6SV4">
    <property type="method" value="EM"/>
    <property type="resolution" value="3.30 A"/>
    <property type="chains" value="I/Ib/Ic=1-144"/>
</dbReference>
<dbReference type="PDB" id="6T4Q">
    <property type="method" value="EM"/>
    <property type="resolution" value="2.60 A"/>
    <property type="chains" value="ST=2-144"/>
</dbReference>
<dbReference type="PDB" id="6T7I">
    <property type="method" value="EM"/>
    <property type="resolution" value="3.20 A"/>
    <property type="chains" value="ST=1-144"/>
</dbReference>
<dbReference type="PDB" id="6T7T">
    <property type="method" value="EM"/>
    <property type="resolution" value="3.10 A"/>
    <property type="chains" value="ST=1-144"/>
</dbReference>
<dbReference type="PDB" id="6T83">
    <property type="method" value="EM"/>
    <property type="resolution" value="4.00 A"/>
    <property type="chains" value="Tb/u=1-144"/>
</dbReference>
<dbReference type="PDB" id="6TB3">
    <property type="method" value="EM"/>
    <property type="resolution" value="2.80 A"/>
    <property type="chains" value="I=2-144"/>
</dbReference>
<dbReference type="PDB" id="6TNU">
    <property type="method" value="EM"/>
    <property type="resolution" value="3.10 A"/>
    <property type="chains" value="I=2-144"/>
</dbReference>
<dbReference type="PDB" id="6WDR">
    <property type="method" value="EM"/>
    <property type="resolution" value="3.70 A"/>
    <property type="chains" value="T=2-144"/>
</dbReference>
<dbReference type="PDB" id="6WOO">
    <property type="method" value="EM"/>
    <property type="resolution" value="2.90 A"/>
    <property type="chains" value="TT=2-144"/>
</dbReference>
<dbReference type="PDB" id="6XIQ">
    <property type="method" value="EM"/>
    <property type="resolution" value="4.20 A"/>
    <property type="chains" value="AJ=1-144"/>
</dbReference>
<dbReference type="PDB" id="6XIR">
    <property type="method" value="EM"/>
    <property type="resolution" value="3.20 A"/>
    <property type="chains" value="AJ=1-144"/>
</dbReference>
<dbReference type="PDB" id="6Y7C">
    <property type="method" value="EM"/>
    <property type="resolution" value="3.80 A"/>
    <property type="chains" value="T=1-144"/>
</dbReference>
<dbReference type="PDB" id="6Z6J">
    <property type="method" value="EM"/>
    <property type="resolution" value="3.40 A"/>
    <property type="chains" value="ST=1-144"/>
</dbReference>
<dbReference type="PDB" id="6Z6K">
    <property type="method" value="EM"/>
    <property type="resolution" value="3.40 A"/>
    <property type="chains" value="ST=1-144"/>
</dbReference>
<dbReference type="PDB" id="6ZCE">
    <property type="method" value="EM"/>
    <property type="resolution" value="5.30 A"/>
    <property type="chains" value="U=1-144"/>
</dbReference>
<dbReference type="PDB" id="6ZQD">
    <property type="method" value="EM"/>
    <property type="resolution" value="3.80 A"/>
    <property type="chains" value="DT=1-144"/>
</dbReference>
<dbReference type="PDB" id="6ZQE">
    <property type="method" value="EM"/>
    <property type="resolution" value="7.10 A"/>
    <property type="chains" value="DT=1-144"/>
</dbReference>
<dbReference type="PDB" id="6ZQF">
    <property type="method" value="EM"/>
    <property type="resolution" value="4.90 A"/>
    <property type="chains" value="DT=1-144"/>
</dbReference>
<dbReference type="PDB" id="6ZQG">
    <property type="method" value="EM"/>
    <property type="resolution" value="3.50 A"/>
    <property type="chains" value="DT=1-144"/>
</dbReference>
<dbReference type="PDB" id="6ZU9">
    <property type="method" value="EM"/>
    <property type="resolution" value="6.20 A"/>
    <property type="chains" value="K=1-144"/>
</dbReference>
<dbReference type="PDB" id="6ZVI">
    <property type="method" value="EM"/>
    <property type="resolution" value="3.00 A"/>
    <property type="chains" value="B=2-144"/>
</dbReference>
<dbReference type="PDB" id="7A1G">
    <property type="method" value="EM"/>
    <property type="resolution" value="3.00 A"/>
    <property type="chains" value="J=2-144"/>
</dbReference>
<dbReference type="PDB" id="7AJU">
    <property type="method" value="EM"/>
    <property type="resolution" value="3.80 A"/>
    <property type="chains" value="DT=1-144"/>
</dbReference>
<dbReference type="PDB" id="7B7D">
    <property type="method" value="EM"/>
    <property type="resolution" value="3.30 A"/>
    <property type="chains" value="I=2-144"/>
</dbReference>
<dbReference type="PDB" id="7D4I">
    <property type="method" value="EM"/>
    <property type="resolution" value="4.00 A"/>
    <property type="chains" value="SU=1-144"/>
</dbReference>
<dbReference type="PDB" id="7D63">
    <property type="method" value="EM"/>
    <property type="resolution" value="12.30 A"/>
    <property type="chains" value="SU=1-144"/>
</dbReference>
<dbReference type="PDB" id="7MPI">
    <property type="method" value="EM"/>
    <property type="resolution" value="3.05 A"/>
    <property type="chains" value="BT=2-142"/>
</dbReference>
<dbReference type="PDB" id="7MPJ">
    <property type="method" value="EM"/>
    <property type="resolution" value="2.70 A"/>
    <property type="chains" value="BT=2-142"/>
</dbReference>
<dbReference type="PDB" id="7N8B">
    <property type="method" value="EM"/>
    <property type="resolution" value="3.05 A"/>
    <property type="chains" value="BT=2-142"/>
</dbReference>
<dbReference type="PDB" id="7NRC">
    <property type="method" value="EM"/>
    <property type="resolution" value="3.90 A"/>
    <property type="chains" value="SI=2-144"/>
</dbReference>
<dbReference type="PDB" id="7NRD">
    <property type="method" value="EM"/>
    <property type="resolution" value="4.36 A"/>
    <property type="chains" value="SI=2-144"/>
</dbReference>
<dbReference type="PDB" id="7ZPQ">
    <property type="method" value="EM"/>
    <property type="resolution" value="3.47 A"/>
    <property type="chains" value="AT=2-144"/>
</dbReference>
<dbReference type="PDB" id="7ZRS">
    <property type="method" value="EM"/>
    <property type="resolution" value="4.80 A"/>
    <property type="chains" value="AT=2-144"/>
</dbReference>
<dbReference type="PDB" id="7ZUW">
    <property type="method" value="EM"/>
    <property type="resolution" value="4.30 A"/>
    <property type="chains" value="AT=2-144"/>
</dbReference>
<dbReference type="PDB" id="7ZUX">
    <property type="method" value="EM"/>
    <property type="resolution" value="2.50 A"/>
    <property type="chains" value="DT=2-144"/>
</dbReference>
<dbReference type="PDB" id="7ZW0">
    <property type="method" value="EM"/>
    <property type="resolution" value="2.40 A"/>
    <property type="chains" value="sI=1-144"/>
</dbReference>
<dbReference type="PDB" id="8BN3">
    <property type="method" value="EM"/>
    <property type="resolution" value="2.40 A"/>
    <property type="chains" value="C9=2-144"/>
</dbReference>
<dbReference type="PDB" id="8BQD">
    <property type="method" value="EM"/>
    <property type="resolution" value="3.90 A"/>
    <property type="chains" value="I=2-144"/>
</dbReference>
<dbReference type="PDB" id="8BQX">
    <property type="method" value="EM"/>
    <property type="resolution" value="3.80 A"/>
    <property type="chains" value="I=2-144"/>
</dbReference>
<dbReference type="PDB" id="8C00">
    <property type="method" value="EM"/>
    <property type="resolution" value="2.90 A"/>
    <property type="chains" value="I=1-144"/>
</dbReference>
<dbReference type="PDB" id="8C01">
    <property type="method" value="EM"/>
    <property type="resolution" value="2.70 A"/>
    <property type="chains" value="I=1-144"/>
</dbReference>
<dbReference type="PDB" id="8CAH">
    <property type="method" value="EM"/>
    <property type="resolution" value="3.00 A"/>
    <property type="chains" value="J=1-144"/>
</dbReference>
<dbReference type="PDB" id="8CAS">
    <property type="method" value="EM"/>
    <property type="resolution" value="3.30 A"/>
    <property type="chains" value="K=1-144"/>
</dbReference>
<dbReference type="PDB" id="8CBJ">
    <property type="method" value="EM"/>
    <property type="resolution" value="3.80 A"/>
    <property type="chains" value="T=1-144"/>
</dbReference>
<dbReference type="PDB" id="8CCS">
    <property type="method" value="EM"/>
    <property type="resolution" value="1.97 A"/>
    <property type="chains" value="v=1-144"/>
</dbReference>
<dbReference type="PDB" id="8CDL">
    <property type="method" value="EM"/>
    <property type="resolution" value="2.72 A"/>
    <property type="chains" value="v=1-144"/>
</dbReference>
<dbReference type="PDB" id="8CDR">
    <property type="method" value="EM"/>
    <property type="resolution" value="2.04 A"/>
    <property type="chains" value="v=1-144"/>
</dbReference>
<dbReference type="PDB" id="8CEH">
    <property type="method" value="EM"/>
    <property type="resolution" value="2.05 A"/>
    <property type="chains" value="v=1-144"/>
</dbReference>
<dbReference type="PDB" id="8CF5">
    <property type="method" value="EM"/>
    <property type="resolution" value="2.71 A"/>
    <property type="chains" value="v=1-144"/>
</dbReference>
<dbReference type="PDB" id="8CG8">
    <property type="method" value="EM"/>
    <property type="resolution" value="2.57 A"/>
    <property type="chains" value="v=1-144"/>
</dbReference>
<dbReference type="PDB" id="8CGN">
    <property type="method" value="EM"/>
    <property type="resolution" value="2.28 A"/>
    <property type="chains" value="v=1-144"/>
</dbReference>
<dbReference type="PDB" id="8CIV">
    <property type="method" value="EM"/>
    <property type="resolution" value="2.47 A"/>
    <property type="chains" value="v=1-144"/>
</dbReference>
<dbReference type="PDB" id="8CKU">
    <property type="method" value="EM"/>
    <property type="resolution" value="3.11 A"/>
    <property type="chains" value="v=1-144"/>
</dbReference>
<dbReference type="PDB" id="8CMJ">
    <property type="method" value="EM"/>
    <property type="resolution" value="3.79 A"/>
    <property type="chains" value="v=1-144"/>
</dbReference>
<dbReference type="PDB" id="8EUB">
    <property type="method" value="EM"/>
    <property type="resolution" value="2.52 A"/>
    <property type="chains" value="BT=1-144"/>
</dbReference>
<dbReference type="PDB" id="8EVP">
    <property type="method" value="EM"/>
    <property type="resolution" value="2.38 A"/>
    <property type="chains" value="BT=1-144"/>
</dbReference>
<dbReference type="PDB" id="8EVQ">
    <property type="method" value="EM"/>
    <property type="resolution" value="2.72 A"/>
    <property type="chains" value="BT=1-144"/>
</dbReference>
<dbReference type="PDB" id="8EVR">
    <property type="method" value="EM"/>
    <property type="resolution" value="2.87 A"/>
    <property type="chains" value="BT=1-144"/>
</dbReference>
<dbReference type="PDB" id="8EVS">
    <property type="method" value="EM"/>
    <property type="resolution" value="2.62 A"/>
    <property type="chains" value="BT=1-144"/>
</dbReference>
<dbReference type="PDB" id="8EVT">
    <property type="method" value="EM"/>
    <property type="resolution" value="2.20 A"/>
    <property type="chains" value="BT=1-144"/>
</dbReference>
<dbReference type="PDB" id="8EWB">
    <property type="method" value="EM"/>
    <property type="resolution" value="2.87 A"/>
    <property type="chains" value="BT=1-144"/>
</dbReference>
<dbReference type="PDB" id="8EWC">
    <property type="method" value="EM"/>
    <property type="resolution" value="2.45 A"/>
    <property type="chains" value="BT=1-144"/>
</dbReference>
<dbReference type="PDB" id="8K2D">
    <property type="method" value="EM"/>
    <property type="resolution" value="3.20 A"/>
    <property type="chains" value="ST=1-144"/>
</dbReference>
<dbReference type="PDB" id="8K82">
    <property type="method" value="EM"/>
    <property type="resolution" value="3.00 A"/>
    <property type="chains" value="ST=1-144"/>
</dbReference>
<dbReference type="PDB" id="8P4V">
    <property type="method" value="X-ray"/>
    <property type="resolution" value="3.16 A"/>
    <property type="chains" value="U/c9=1-144"/>
</dbReference>
<dbReference type="PDB" id="8P9A">
    <property type="method" value="X-ray"/>
    <property type="resolution" value="2.90 A"/>
    <property type="chains" value="U/c9=1-144"/>
</dbReference>
<dbReference type="PDB" id="8T2X">
    <property type="method" value="EM"/>
    <property type="resolution" value="2.46 A"/>
    <property type="chains" value="BT=1-144"/>
</dbReference>
<dbReference type="PDB" id="8T2Y">
    <property type="method" value="EM"/>
    <property type="resolution" value="2.20 A"/>
    <property type="chains" value="BT=1-144"/>
</dbReference>
<dbReference type="PDB" id="8T2Z">
    <property type="method" value="EM"/>
    <property type="resolution" value="2.40 A"/>
    <property type="chains" value="BT=1-144"/>
</dbReference>
<dbReference type="PDB" id="8T30">
    <property type="method" value="EM"/>
    <property type="resolution" value="2.88 A"/>
    <property type="chains" value="BT=1-144"/>
</dbReference>
<dbReference type="PDB" id="8T3A">
    <property type="method" value="EM"/>
    <property type="resolution" value="2.86 A"/>
    <property type="chains" value="BT=1-144"/>
</dbReference>
<dbReference type="PDB" id="8T3B">
    <property type="method" value="EM"/>
    <property type="resolution" value="3.08 A"/>
    <property type="chains" value="BT=1-144"/>
</dbReference>
<dbReference type="PDB" id="8T3C">
    <property type="method" value="EM"/>
    <property type="resolution" value="3.86 A"/>
    <property type="chains" value="BT=1-144"/>
</dbReference>
<dbReference type="PDB" id="8T3D">
    <property type="method" value="EM"/>
    <property type="resolution" value="2.95 A"/>
    <property type="chains" value="BT=1-144"/>
</dbReference>
<dbReference type="PDB" id="8T3E">
    <property type="method" value="EM"/>
    <property type="resolution" value="3.04 A"/>
    <property type="chains" value="BT=1-144"/>
</dbReference>
<dbReference type="PDB" id="8T3F">
    <property type="method" value="EM"/>
    <property type="resolution" value="3.09 A"/>
    <property type="chains" value="BT=1-144"/>
</dbReference>
<dbReference type="PDB" id="8UT0">
    <property type="method" value="EM"/>
    <property type="resolution" value="3.22 A"/>
    <property type="chains" value="SI=2-144"/>
</dbReference>
<dbReference type="PDB" id="8UTI">
    <property type="method" value="EM"/>
    <property type="resolution" value="3.13 A"/>
    <property type="chains" value="SI=2-144"/>
</dbReference>
<dbReference type="PDB" id="8XU8">
    <property type="method" value="EM"/>
    <property type="resolution" value="3.40 A"/>
    <property type="chains" value="SI=2-144"/>
</dbReference>
<dbReference type="PDB" id="8Y0U">
    <property type="method" value="EM"/>
    <property type="resolution" value="3.59 A"/>
    <property type="chains" value="ST=1-144"/>
</dbReference>
<dbReference type="PDB" id="8YLD">
    <property type="method" value="EM"/>
    <property type="resolution" value="3.90 A"/>
    <property type="chains" value="SI=2-144"/>
</dbReference>
<dbReference type="PDB" id="8YLR">
    <property type="method" value="EM"/>
    <property type="resolution" value="3.90 A"/>
    <property type="chains" value="SI=2-144"/>
</dbReference>
<dbReference type="PDB" id="8Z70">
    <property type="method" value="EM"/>
    <property type="resolution" value="3.20 A"/>
    <property type="chains" value="SI=2-144"/>
</dbReference>
<dbReference type="PDB" id="8Z71">
    <property type="method" value="EM"/>
    <property type="resolution" value="3.60 A"/>
    <property type="chains" value="SI=2-144"/>
</dbReference>
<dbReference type="PDB" id="9F9S">
    <property type="method" value="EM"/>
    <property type="resolution" value="2.90 A"/>
    <property type="chains" value="Rt/St=1-144"/>
</dbReference>
<dbReference type="PDBsum" id="3J6X"/>
<dbReference type="PDBsum" id="3J6Y"/>
<dbReference type="PDBsum" id="3J77"/>
<dbReference type="PDBsum" id="3J78"/>
<dbReference type="PDBsum" id="4U3M"/>
<dbReference type="PDBsum" id="4U3N"/>
<dbReference type="PDBsum" id="4U3U"/>
<dbReference type="PDBsum" id="4U4N"/>
<dbReference type="PDBsum" id="4U4O"/>
<dbReference type="PDBsum" id="4U4Q"/>
<dbReference type="PDBsum" id="4U4R"/>
<dbReference type="PDBsum" id="4U4U"/>
<dbReference type="PDBsum" id="4U4Y"/>
<dbReference type="PDBsum" id="4U4Z"/>
<dbReference type="PDBsum" id="4U50"/>
<dbReference type="PDBsum" id="4U51"/>
<dbReference type="PDBsum" id="4U52"/>
<dbReference type="PDBsum" id="4U53"/>
<dbReference type="PDBsum" id="4U55"/>
<dbReference type="PDBsum" id="4U56"/>
<dbReference type="PDBsum" id="4U6F"/>
<dbReference type="PDBsum" id="4V6I"/>
<dbReference type="PDBsum" id="4V7R"/>
<dbReference type="PDBsum" id="4V88"/>
<dbReference type="PDBsum" id="4V8Y"/>
<dbReference type="PDBsum" id="4V8Z"/>
<dbReference type="PDBsum" id="4V92"/>
<dbReference type="PDBsum" id="5DAT"/>
<dbReference type="PDBsum" id="5DC3"/>
<dbReference type="PDBsum" id="5DGE"/>
<dbReference type="PDBsum" id="5DGF"/>
<dbReference type="PDBsum" id="5DGV"/>
<dbReference type="PDBsum" id="5FCI"/>
<dbReference type="PDBsum" id="5FCJ"/>
<dbReference type="PDBsum" id="5I4L"/>
<dbReference type="PDBsum" id="5JUO"/>
<dbReference type="PDBsum" id="5JUP"/>
<dbReference type="PDBsum" id="5JUS"/>
<dbReference type="PDBsum" id="5JUT"/>
<dbReference type="PDBsum" id="5JUU"/>
<dbReference type="PDBsum" id="5LYB"/>
<dbReference type="PDBsum" id="5M1J"/>
<dbReference type="PDBsum" id="5MC6"/>
<dbReference type="PDBsum" id="5MEI"/>
<dbReference type="PDBsum" id="5NDG"/>
<dbReference type="PDBsum" id="5NDV"/>
<dbReference type="PDBsum" id="5NDW"/>
<dbReference type="PDBsum" id="5OBM"/>
<dbReference type="PDBsum" id="5ON6"/>
<dbReference type="PDBsum" id="5TBW"/>
<dbReference type="PDBsum" id="5TGA"/>
<dbReference type="PDBsum" id="5TGM"/>
<dbReference type="PDBsum" id="6EML"/>
<dbReference type="PDBsum" id="6FAI"/>
<dbReference type="PDBsum" id="6GQ1"/>
<dbReference type="PDBsum" id="6GQB"/>
<dbReference type="PDBsum" id="6GQV"/>
<dbReference type="PDBsum" id="6HHQ"/>
<dbReference type="PDBsum" id="6I7O"/>
<dbReference type="PDBsum" id="6Q8Y"/>
<dbReference type="PDBsum" id="6RBD"/>
<dbReference type="PDBsum" id="6RBE"/>
<dbReference type="PDBsum" id="6S47"/>
<dbReference type="PDBsum" id="6SNT"/>
<dbReference type="PDBsum" id="6SV4"/>
<dbReference type="PDBsum" id="6T4Q"/>
<dbReference type="PDBsum" id="6T7I"/>
<dbReference type="PDBsum" id="6T7T"/>
<dbReference type="PDBsum" id="6T83"/>
<dbReference type="PDBsum" id="6TB3"/>
<dbReference type="PDBsum" id="6TNU"/>
<dbReference type="PDBsum" id="6WDR"/>
<dbReference type="PDBsum" id="6WOO"/>
<dbReference type="PDBsum" id="6XIQ"/>
<dbReference type="PDBsum" id="6XIR"/>
<dbReference type="PDBsum" id="6Y7C"/>
<dbReference type="PDBsum" id="6Z6J"/>
<dbReference type="PDBsum" id="6Z6K"/>
<dbReference type="PDBsum" id="6ZCE"/>
<dbReference type="PDBsum" id="6ZQD"/>
<dbReference type="PDBsum" id="6ZQE"/>
<dbReference type="PDBsum" id="6ZQF"/>
<dbReference type="PDBsum" id="6ZQG"/>
<dbReference type="PDBsum" id="6ZU9"/>
<dbReference type="PDBsum" id="6ZVI"/>
<dbReference type="PDBsum" id="7A1G"/>
<dbReference type="PDBsum" id="7AJU"/>
<dbReference type="PDBsum" id="7B7D"/>
<dbReference type="PDBsum" id="7D4I"/>
<dbReference type="PDBsum" id="7D63"/>
<dbReference type="PDBsum" id="7MPI"/>
<dbReference type="PDBsum" id="7MPJ"/>
<dbReference type="PDBsum" id="7N8B"/>
<dbReference type="PDBsum" id="7NRC"/>
<dbReference type="PDBsum" id="7NRD"/>
<dbReference type="PDBsum" id="7ZPQ"/>
<dbReference type="PDBsum" id="7ZRS"/>
<dbReference type="PDBsum" id="7ZUW"/>
<dbReference type="PDBsum" id="7ZUX"/>
<dbReference type="PDBsum" id="7ZW0"/>
<dbReference type="PDBsum" id="8BN3"/>
<dbReference type="PDBsum" id="8BQD"/>
<dbReference type="PDBsum" id="8BQX"/>
<dbReference type="PDBsum" id="8C00"/>
<dbReference type="PDBsum" id="8C01"/>
<dbReference type="PDBsum" id="8CAH"/>
<dbReference type="PDBsum" id="8CAS"/>
<dbReference type="PDBsum" id="8CBJ"/>
<dbReference type="PDBsum" id="8CCS"/>
<dbReference type="PDBsum" id="8CDL"/>
<dbReference type="PDBsum" id="8CDR"/>
<dbReference type="PDBsum" id="8CEH"/>
<dbReference type="PDBsum" id="8CF5"/>
<dbReference type="PDBsum" id="8CG8"/>
<dbReference type="PDBsum" id="8CGN"/>
<dbReference type="PDBsum" id="8CIV"/>
<dbReference type="PDBsum" id="8CKU"/>
<dbReference type="PDBsum" id="8CMJ"/>
<dbReference type="PDBsum" id="8EUB"/>
<dbReference type="PDBsum" id="8EVP"/>
<dbReference type="PDBsum" id="8EVQ"/>
<dbReference type="PDBsum" id="8EVR"/>
<dbReference type="PDBsum" id="8EVS"/>
<dbReference type="PDBsum" id="8EVT"/>
<dbReference type="PDBsum" id="8EWB"/>
<dbReference type="PDBsum" id="8EWC"/>
<dbReference type="PDBsum" id="8K2D"/>
<dbReference type="PDBsum" id="8K82"/>
<dbReference type="PDBsum" id="8P4V"/>
<dbReference type="PDBsum" id="8P9A"/>
<dbReference type="PDBsum" id="8T2X"/>
<dbReference type="PDBsum" id="8T2Y"/>
<dbReference type="PDBsum" id="8T2Z"/>
<dbReference type="PDBsum" id="8T30"/>
<dbReference type="PDBsum" id="8T3A"/>
<dbReference type="PDBsum" id="8T3B"/>
<dbReference type="PDBsum" id="8T3C"/>
<dbReference type="PDBsum" id="8T3D"/>
<dbReference type="PDBsum" id="8T3E"/>
<dbReference type="PDBsum" id="8T3F"/>
<dbReference type="PDBsum" id="8UT0"/>
<dbReference type="PDBsum" id="8UTI"/>
<dbReference type="PDBsum" id="8XU8"/>
<dbReference type="PDBsum" id="8Y0U"/>
<dbReference type="PDBsum" id="8YLD"/>
<dbReference type="PDBsum" id="8YLR"/>
<dbReference type="PDBsum" id="8Z70"/>
<dbReference type="PDBsum" id="8Z71"/>
<dbReference type="PDBsum" id="9F9S"/>
<dbReference type="EMDB" id="EMD-0047"/>
<dbReference type="EMDB" id="EMD-0048"/>
<dbReference type="EMDB" id="EMD-0049"/>
<dbReference type="EMDB" id="EMD-10098"/>
<dbReference type="EMDB" id="EMD-10262"/>
<dbReference type="EMDB" id="EMD-10315"/>
<dbReference type="EMDB" id="EMD-10377"/>
<dbReference type="EMDB" id="EMD-10396"/>
<dbReference type="EMDB" id="EMD-10397"/>
<dbReference type="EMDB" id="EMD-10398"/>
<dbReference type="EMDB" id="EMD-10431"/>
<dbReference type="EMDB" id="EMD-10537"/>
<dbReference type="EMDB" id="EMD-10713"/>
<dbReference type="EMDB" id="EMD-11096"/>
<dbReference type="EMDB" id="EMD-11097"/>
<dbReference type="EMDB" id="EMD-11160"/>
<dbReference type="EMDB" id="EMD-11360"/>
<dbReference type="EMDB" id="EMD-11361"/>
<dbReference type="EMDB" id="EMD-11362"/>
<dbReference type="EMDB" id="EMD-11363"/>
<dbReference type="EMDB" id="EMD-11439"/>
<dbReference type="EMDB" id="EMD-11457"/>
<dbReference type="EMDB" id="EMD-11608"/>
<dbReference type="EMDB" id="EMD-11808"/>
<dbReference type="EMDB" id="EMD-12081"/>
<dbReference type="EMDB" id="EMD-12534"/>
<dbReference type="EMDB" id="EMD-12535"/>
<dbReference type="EMDB" id="EMD-14861"/>
<dbReference type="EMDB" id="EMD-14921"/>
<dbReference type="EMDB" id="EMD-14978"/>
<dbReference type="EMDB" id="EMD-14979"/>
<dbReference type="EMDB" id="EMD-14990"/>
<dbReference type="EMDB" id="EMD-16127"/>
<dbReference type="EMDB" id="EMD-16182"/>
<dbReference type="EMDB" id="EMD-16191"/>
<dbReference type="EMDB" id="EMD-16347"/>
<dbReference type="EMDB" id="EMD-16349"/>
<dbReference type="EMDB" id="EMD-16525"/>
<dbReference type="EMDB" id="EMD-16533"/>
<dbReference type="EMDB" id="EMD-16541"/>
<dbReference type="EMDB" id="EMD-16563"/>
<dbReference type="EMDB" id="EMD-16591"/>
<dbReference type="EMDB" id="EMD-16594"/>
<dbReference type="EMDB" id="EMD-16609"/>
<dbReference type="EMDB" id="EMD-16616"/>
<dbReference type="EMDB" id="EMD-16634"/>
<dbReference type="EMDB" id="EMD-16648"/>
<dbReference type="EMDB" id="EMD-16684"/>
<dbReference type="EMDB" id="EMD-16702"/>
<dbReference type="EMDB" id="EMD-16729"/>
<dbReference type="EMDB" id="EMD-21644"/>
<dbReference type="EMDB" id="EMD-21859"/>
<dbReference type="EMDB" id="EMD-22196"/>
<dbReference type="EMDB" id="EMD-22198"/>
<dbReference type="EMDB" id="EMD-23934"/>
<dbReference type="EMDB" id="EMD-23935"/>
<dbReference type="EMDB" id="EMD-24235"/>
<dbReference type="EMDB" id="EMD-28610"/>
<dbReference type="EMDB" id="EMD-28632"/>
<dbReference type="EMDB" id="EMD-28633"/>
<dbReference type="EMDB" id="EMD-28634"/>
<dbReference type="EMDB" id="EMD-28635"/>
<dbReference type="EMDB" id="EMD-28636"/>
<dbReference type="EMDB" id="EMD-28642"/>
<dbReference type="EMDB" id="EMD-28643"/>
<dbReference type="EMDB" id="EMD-30574"/>
<dbReference type="EMDB" id="EMD-30588"/>
<dbReference type="EMDB" id="EMD-3461"/>
<dbReference type="EMDB" id="EMD-36839"/>
<dbReference type="EMDB" id="EMD-36945"/>
<dbReference type="EMDB" id="EMD-38660"/>
<dbReference type="EMDB" id="EMD-40990"/>
<dbReference type="EMDB" id="EMD-40991"/>
<dbReference type="EMDB" id="EMD-40992"/>
<dbReference type="EMDB" id="EMD-40993"/>
<dbReference type="EMDB" id="EMD-40997"/>
<dbReference type="EMDB" id="EMD-40998"/>
<dbReference type="EMDB" id="EMD-40999"/>
<dbReference type="EMDB" id="EMD-41000"/>
<dbReference type="EMDB" id="EMD-41001"/>
<dbReference type="EMDB" id="EMD-41002"/>
<dbReference type="EMDB" id="EMD-4140"/>
<dbReference type="EMDB" id="EMD-4214"/>
<dbReference type="EMDB" id="EMD-42525"/>
<dbReference type="EMDB" id="EMD-42540"/>
<dbReference type="EMDB" id="EMD-4427"/>
<dbReference type="EMDB" id="EMD-4474"/>
<dbReference type="EMDB" id="EMD-4792"/>
<dbReference type="EMDB" id="EMD-4793"/>
<dbReference type="EMDB" id="EMD-50259"/>
<dbReference type="SMR" id="P07280"/>
<dbReference type="BioGRID" id="34280">
    <property type="interactions" value="765"/>
</dbReference>
<dbReference type="ComplexPortal" id="CPX-1599">
    <property type="entry name" value="40S cytosolic small ribosomal subunit"/>
</dbReference>
<dbReference type="FunCoup" id="P07280">
    <property type="interactions" value="1028"/>
</dbReference>
<dbReference type="IntAct" id="P07280">
    <property type="interactions" value="95"/>
</dbReference>
<dbReference type="MINT" id="P07280"/>
<dbReference type="STRING" id="4932.YOL121C"/>
<dbReference type="iPTMnet" id="P07280"/>
<dbReference type="PaxDb" id="4932-YOL121C"/>
<dbReference type="PeptideAtlas" id="P07280"/>
<dbReference type="TopDownProteomics" id="P07280"/>
<dbReference type="EnsemblFungi" id="YOL121C_mRNA">
    <property type="protein sequence ID" value="YOL121C"/>
    <property type="gene ID" value="YOL121C"/>
</dbReference>
<dbReference type="GeneID" id="854028"/>
<dbReference type="KEGG" id="sce:YOL121C"/>
<dbReference type="AGR" id="SGD:S000005481"/>
<dbReference type="SGD" id="S000005481">
    <property type="gene designation" value="RPS19A"/>
</dbReference>
<dbReference type="VEuPathDB" id="FungiDB:YOL121C"/>
<dbReference type="eggNOG" id="KOG3411">
    <property type="taxonomic scope" value="Eukaryota"/>
</dbReference>
<dbReference type="GeneTree" id="ENSGT00940000176238"/>
<dbReference type="HOGENOM" id="CLU_108559_3_0_1"/>
<dbReference type="InParanoid" id="P07280"/>
<dbReference type="OMA" id="WAPFVKT"/>
<dbReference type="OrthoDB" id="428974at2759"/>
<dbReference type="BioCyc" id="YEAST:G3O-33517-MONOMER"/>
<dbReference type="Reactome" id="R-SCE-156827">
    <property type="pathway name" value="L13a-mediated translational silencing of Ceruloplasmin expression"/>
</dbReference>
<dbReference type="Reactome" id="R-SCE-1799339">
    <property type="pathway name" value="SRP-dependent cotranslational protein targeting to membrane"/>
</dbReference>
<dbReference type="Reactome" id="R-SCE-72649">
    <property type="pathway name" value="Translation initiation complex formation"/>
</dbReference>
<dbReference type="Reactome" id="R-SCE-72689">
    <property type="pathway name" value="Formation of a pool of free 40S subunits"/>
</dbReference>
<dbReference type="Reactome" id="R-SCE-72695">
    <property type="pathway name" value="Formation of the ternary complex, and subsequently, the 43S complex"/>
</dbReference>
<dbReference type="Reactome" id="R-SCE-72702">
    <property type="pathway name" value="Ribosomal scanning and start codon recognition"/>
</dbReference>
<dbReference type="Reactome" id="R-SCE-72706">
    <property type="pathway name" value="GTP hydrolysis and joining of the 60S ribosomal subunit"/>
</dbReference>
<dbReference type="Reactome" id="R-SCE-975956">
    <property type="pathway name" value="Nonsense Mediated Decay (NMD) independent of the Exon Junction Complex (EJC)"/>
</dbReference>
<dbReference type="Reactome" id="R-SCE-975957">
    <property type="pathway name" value="Nonsense Mediated Decay (NMD) enhanced by the Exon Junction Complex (EJC)"/>
</dbReference>
<dbReference type="BioGRID-ORCS" id="854028">
    <property type="hits" value="5 hits in 10 CRISPR screens"/>
</dbReference>
<dbReference type="PRO" id="PR:P07280"/>
<dbReference type="Proteomes" id="UP000002311">
    <property type="component" value="Chromosome XV"/>
</dbReference>
<dbReference type="RNAct" id="P07280">
    <property type="molecule type" value="protein"/>
</dbReference>
<dbReference type="GO" id="GO:0005829">
    <property type="term" value="C:cytosol"/>
    <property type="evidence" value="ECO:0000304"/>
    <property type="project" value="Reactome"/>
</dbReference>
<dbReference type="GO" id="GO:0022627">
    <property type="term" value="C:cytosolic small ribosomal subunit"/>
    <property type="evidence" value="ECO:0000314"/>
    <property type="project" value="SGD"/>
</dbReference>
<dbReference type="GO" id="GO:0003723">
    <property type="term" value="F:RNA binding"/>
    <property type="evidence" value="ECO:0000318"/>
    <property type="project" value="GO_Central"/>
</dbReference>
<dbReference type="GO" id="GO:0003735">
    <property type="term" value="F:structural constituent of ribosome"/>
    <property type="evidence" value="ECO:0000314"/>
    <property type="project" value="SGD"/>
</dbReference>
<dbReference type="GO" id="GO:0000028">
    <property type="term" value="P:ribosomal small subunit assembly"/>
    <property type="evidence" value="ECO:0000318"/>
    <property type="project" value="GO_Central"/>
</dbReference>
<dbReference type="GO" id="GO:0042274">
    <property type="term" value="P:ribosomal small subunit biogenesis"/>
    <property type="evidence" value="ECO:0000315"/>
    <property type="project" value="SGD"/>
</dbReference>
<dbReference type="GO" id="GO:0000054">
    <property type="term" value="P:ribosomal subunit export from nucleus"/>
    <property type="evidence" value="ECO:0000315"/>
    <property type="project" value="SGD"/>
</dbReference>
<dbReference type="GO" id="GO:0006412">
    <property type="term" value="P:translation"/>
    <property type="evidence" value="ECO:0007669"/>
    <property type="project" value="InterPro"/>
</dbReference>
<dbReference type="FunFam" id="1.10.10.10:FF:000118">
    <property type="entry name" value="40S ribosomal protein S19"/>
    <property type="match status" value="1"/>
</dbReference>
<dbReference type="Gene3D" id="1.10.10.10">
    <property type="entry name" value="Winged helix-like DNA-binding domain superfamily/Winged helix DNA-binding domain"/>
    <property type="match status" value="1"/>
</dbReference>
<dbReference type="InterPro" id="IPR001266">
    <property type="entry name" value="Ribosomal_eS19"/>
</dbReference>
<dbReference type="InterPro" id="IPR018277">
    <property type="entry name" value="Ribosomal_eS19_CS"/>
</dbReference>
<dbReference type="InterPro" id="IPR036388">
    <property type="entry name" value="WH-like_DNA-bd_sf"/>
</dbReference>
<dbReference type="InterPro" id="IPR036390">
    <property type="entry name" value="WH_DNA-bd_sf"/>
</dbReference>
<dbReference type="PANTHER" id="PTHR11710">
    <property type="entry name" value="40S RIBOSOMAL PROTEIN S19"/>
    <property type="match status" value="1"/>
</dbReference>
<dbReference type="PANTHER" id="PTHR11710:SF0">
    <property type="entry name" value="40S RIBOSOMAL PROTEIN S19"/>
    <property type="match status" value="1"/>
</dbReference>
<dbReference type="Pfam" id="PF01090">
    <property type="entry name" value="Ribosomal_S19e"/>
    <property type="match status" value="1"/>
</dbReference>
<dbReference type="SMART" id="SM01413">
    <property type="entry name" value="Ribosomal_S19e"/>
    <property type="match status" value="1"/>
</dbReference>
<dbReference type="SUPFAM" id="SSF46785">
    <property type="entry name" value="Winged helix' DNA-binding domain"/>
    <property type="match status" value="1"/>
</dbReference>
<dbReference type="PROSITE" id="PS00628">
    <property type="entry name" value="RIBOSOMAL_S19E"/>
    <property type="match status" value="1"/>
</dbReference>
<proteinExistence type="evidence at protein level"/>
<gene>
    <name evidence="8" type="primary">RPS19A</name>
    <name type="synonym">RP55A</name>
    <name type="synonym">RPS16AA</name>
    <name type="ordered locus">YOL121C</name>
</gene>
<feature type="initiator methionine" description="Removed" evidence="6">
    <location>
        <position position="1"/>
    </location>
</feature>
<feature type="chain" id="PRO_0000153835" description="Small ribosomal subunit protein eS19A">
    <location>
        <begin position="2"/>
        <end position="144"/>
    </location>
</feature>
<feature type="mutagenesis site" description="Partial loss of function; decreased 18S rRNA, decreases binding to 20S pre-rRNA complex, slow growth in double RPS19A/RPS19B mutant." evidence="4">
    <original>I</original>
    <variation>F</variation>
    <location>
        <position position="15"/>
    </location>
</feature>
<feature type="mutagenesis site" description="Loss of mature 18S rRNA, protein doesn't bind 20S pre-RNA complex. Lethal in double RPS19A/RPS19B mutant." evidence="4">
    <original>R</original>
    <variation>E</variation>
    <variation>Q</variation>
    <location>
        <position position="57"/>
    </location>
</feature>
<feature type="mutagenesis site" description="Loss of mature 18S rRNA, protein binds 20S pre-RNA complex poorly. Lethal in double RPS19A/RPS19B mutant." evidence="4">
    <original>R</original>
    <variation>E</variation>
    <location>
        <position position="63"/>
    </location>
</feature>
<feature type="mutagenesis site" description="Lethal in double RPS19A/RPS19B mutant, considerable decrease in 18S rRNA production." evidence="3 4">
    <original>I</original>
    <variation>P</variation>
    <location>
        <position position="65"/>
    </location>
</feature>
<feature type="mutagenesis site" description="Decreases mature 18S rRNA, protein binds 20S pre-RNA complex poorly. Lethal in double RPS19A/RPS19B mutant." evidence="4">
    <original>R</original>
    <variation>E</variation>
    <location>
        <position position="102"/>
    </location>
</feature>
<feature type="mutagenesis site" description="Decreases mature 18S rRNA, protein binds 20S pre-RNA complex poorly. Lethal in double RPS19A/RPS19B mutant." evidence="4">
    <original>R</original>
    <variation>E</variation>
    <location>
        <position position="122"/>
    </location>
</feature>
<feature type="helix" evidence="14">
    <location>
        <begin position="6"/>
        <end position="8"/>
    </location>
</feature>
<feature type="helix" evidence="14">
    <location>
        <begin position="11"/>
        <end position="25"/>
    </location>
</feature>
<feature type="turn" evidence="14">
    <location>
        <begin position="34"/>
        <end position="36"/>
    </location>
</feature>
<feature type="strand" evidence="13">
    <location>
        <begin position="39"/>
        <end position="42"/>
    </location>
</feature>
<feature type="turn" evidence="14">
    <location>
        <begin position="50"/>
        <end position="52"/>
    </location>
</feature>
<feature type="helix" evidence="14">
    <location>
        <begin position="53"/>
        <end position="66"/>
    </location>
</feature>
<feature type="strand" evidence="12">
    <location>
        <begin position="68"/>
        <end position="71"/>
    </location>
</feature>
<feature type="helix" evidence="14">
    <location>
        <begin position="73"/>
        <end position="79"/>
    </location>
</feature>
<feature type="strand" evidence="14">
    <location>
        <begin position="82"/>
        <end position="84"/>
    </location>
</feature>
<feature type="strand" evidence="14">
    <location>
        <begin position="92"/>
        <end position="94"/>
    </location>
</feature>
<feature type="helix" evidence="14">
    <location>
        <begin position="98"/>
        <end position="110"/>
    </location>
</feature>
<feature type="strand" evidence="14">
    <location>
        <begin position="113"/>
        <end position="116"/>
    </location>
</feature>
<feature type="strand" evidence="14">
    <location>
        <begin position="120"/>
        <end position="124"/>
    </location>
</feature>
<feature type="helix" evidence="14">
    <location>
        <begin position="126"/>
        <end position="141"/>
    </location>
</feature>
<comment type="function">
    <text evidence="3 4 10">Component of the ribosome, a large ribonucleoprotein complex responsible for the synthesis of proteins in the cell. The small ribosomal subunit (SSU) binds messenger RNAs (mRNAs) and translates the encoded message by selecting cognate aminoacyl-transfer RNA (tRNA) molecules. The large subunit (LSU) contains the ribosomal catalytic site termed the peptidyl transferase center (PTC), which catalyzes the formation of peptide bonds, thereby polymerizing the amino acids delivered by tRNAs into a polypeptide chain. The nascent polypeptides leave the ribosome through a tunnel in the LSU and interact with protein factors that function in enzymatic processing, targeting, and the membrane insertion of nascent chains at the exit of the ribosomal tunnel (PubMed:22096102). eS19 is required for proper maturation of the small (40S) ribosomal subunit. Binds to 40S pre-ribosomal particles, probably required after association of NOC4 but before association of ENP1, TSR1 and RIO2 with 20/21S pre-rRNA (PubMed:16159874, PubMed:17726054).</text>
</comment>
<comment type="subunit">
    <text evidence="5 11">Component of the small ribosomal subunit (SSU). Mature yeast ribosomes consist of a small (40S) and a large (60S) subunit. The 40S small subunit contains 1 molecule of ribosomal RNA (18S rRNA) and 33 different proteins (encoded by 57 genes). The large 60S subunit contains 3 rRNA molecules (25S, 5.8S and 5S rRNA) and 46 different proteins (encoded by 81 genes) (PubMed:22096102, PubMed:9559554).</text>
</comment>
<comment type="subcellular location">
    <subcellularLocation>
        <location evidence="1 5">Cytoplasm</location>
    </subcellularLocation>
</comment>
<comment type="disruption phenotype">
    <text evidence="3 4">Disruption of a single RPS19 gene reduces cell growth; a double disruption is lethal. Depletion experiments show the proteins are required for correct maturation of precursor rRNA to generate the 18S small rRNA. A specific site between the 18S and 5.8S precursors (site A2 in ETS1) is not cleaved in disruption mutants. Partially assembled ribosomes are retained in the nucleolus rather than being exported to the cytoplasm. All effects are exacerbated in the double disruption. Increases association of NOC4 with 20S/21S pre-rRNA, decreases association of ENP1, TSR1 and RIO2 with 20S/21S pre-rRNA.</text>
</comment>
<comment type="miscellaneous">
    <text evidence="2">Present with 29000 molecules/cell in log phase SD medium.</text>
</comment>
<comment type="miscellaneous">
    <text evidence="9">There are 2 genes for eS19 in yeast.</text>
</comment>
<comment type="similarity">
    <text evidence="9">Belongs to the eukaryotic ribosomal protein eS19 family.</text>
</comment>
<accession>P07280</accession>
<accession>D6W1U7</accession>
<name>RS19A_YEAST</name>
<evidence type="ECO:0000269" key="1">
    <source>
    </source>
</evidence>
<evidence type="ECO:0000269" key="2">
    <source>
    </source>
</evidence>
<evidence type="ECO:0000269" key="3">
    <source>
    </source>
</evidence>
<evidence type="ECO:0000269" key="4">
    <source>
    </source>
</evidence>
<evidence type="ECO:0000269" key="5">
    <source>
    </source>
</evidence>
<evidence type="ECO:0000269" key="6">
    <source>
    </source>
</evidence>
<evidence type="ECO:0000303" key="7">
    <source>
    </source>
</evidence>
<evidence type="ECO:0000303" key="8">
    <source>
    </source>
</evidence>
<evidence type="ECO:0000305" key="9"/>
<evidence type="ECO:0000305" key="10">
    <source>
    </source>
</evidence>
<evidence type="ECO:0000305" key="11">
    <source>
    </source>
</evidence>
<evidence type="ECO:0007829" key="12">
    <source>
        <dbReference type="PDB" id="6FAI"/>
    </source>
</evidence>
<evidence type="ECO:0007829" key="13">
    <source>
        <dbReference type="PDB" id="6ZVI"/>
    </source>
</evidence>
<evidence type="ECO:0007829" key="14">
    <source>
        <dbReference type="PDB" id="8C01"/>
    </source>
</evidence>
<protein>
    <recommendedName>
        <fullName evidence="7">Small ribosomal subunit protein eS19A</fullName>
    </recommendedName>
    <alternativeName>
        <fullName evidence="8">40S ribosomal protein S19-A</fullName>
    </alternativeName>
    <alternativeName>
        <fullName>RP55A</fullName>
    </alternativeName>
    <alternativeName>
        <fullName>S16a</fullName>
    </alternativeName>
    <alternativeName>
        <fullName>YP45</fullName>
    </alternativeName>
    <alternativeName>
        <fullName>YS16A</fullName>
    </alternativeName>
</protein>
<sequence length="144" mass="15917">MPGVSVRDVAAQDFINAYASFLQRQGKLEVPGYVDIVKTSSGNEMPPQDAEGWFYKRAASVARHIYMRKQVGVGKLNKLYGGAKSRGVRPYKHIDASGSINRKVLQALEKIGIVEISPKGGRRISENGQRDLDRIAAQTLEEDE</sequence>
<reference key="1">
    <citation type="journal article" date="1984" name="Nucleic Acids Res.">
        <title>Structure and organization of two linked ribosomal protein genes in yeast.</title>
        <authorList>
            <person name="Molenaar C.M.T."/>
            <person name="Woudt L.P."/>
            <person name="Jansen A.E.M."/>
            <person name="Mager W.H."/>
            <person name="Planta R.J."/>
            <person name="Donovan D.M."/>
            <person name="Pearson N.J."/>
        </authorList>
    </citation>
    <scope>NUCLEOTIDE SEQUENCE [GENOMIC DNA]</scope>
</reference>
<reference key="2">
    <citation type="journal article" date="1996" name="Yeast">
        <title>DNA sequence analysis of a 10 624 bp fragment of the left arm of chromosome XV from Saccharomyces cerevisiae reveals a RNA binding protein, a mitochondrial protein, two ribosomal proteins and two new open reading frames.</title>
        <authorList>
            <person name="Lafuente M.J."/>
            <person name="Gamo F.-J."/>
            <person name="Gancedo C."/>
        </authorList>
    </citation>
    <scope>NUCLEOTIDE SEQUENCE [GENOMIC DNA]</scope>
    <source>
        <strain>ATCC 96604 / S288c / FY1679</strain>
    </source>
</reference>
<reference key="3">
    <citation type="journal article" date="1997" name="Nature">
        <title>The nucleotide sequence of Saccharomyces cerevisiae chromosome XV.</title>
        <authorList>
            <person name="Dujon B."/>
            <person name="Albermann K."/>
            <person name="Aldea M."/>
            <person name="Alexandraki D."/>
            <person name="Ansorge W."/>
            <person name="Arino J."/>
            <person name="Benes V."/>
            <person name="Bohn C."/>
            <person name="Bolotin-Fukuhara M."/>
            <person name="Bordonne R."/>
            <person name="Boyer J."/>
            <person name="Camasses A."/>
            <person name="Casamayor A."/>
            <person name="Casas C."/>
            <person name="Cheret G."/>
            <person name="Cziepluch C."/>
            <person name="Daignan-Fornier B."/>
            <person name="Dang V.-D."/>
            <person name="de Haan M."/>
            <person name="Delius H."/>
            <person name="Durand P."/>
            <person name="Fairhead C."/>
            <person name="Feldmann H."/>
            <person name="Gaillon L."/>
            <person name="Galisson F."/>
            <person name="Gamo F.-J."/>
            <person name="Gancedo C."/>
            <person name="Goffeau A."/>
            <person name="Goulding S.E."/>
            <person name="Grivell L.A."/>
            <person name="Habbig B."/>
            <person name="Hand N.J."/>
            <person name="Hani J."/>
            <person name="Hattenhorst U."/>
            <person name="Hebling U."/>
            <person name="Hernando Y."/>
            <person name="Herrero E."/>
            <person name="Heumann K."/>
            <person name="Hiesel R."/>
            <person name="Hilger F."/>
            <person name="Hofmann B."/>
            <person name="Hollenberg C.P."/>
            <person name="Hughes B."/>
            <person name="Jauniaux J.-C."/>
            <person name="Kalogeropoulos A."/>
            <person name="Katsoulou C."/>
            <person name="Kordes E."/>
            <person name="Lafuente M.J."/>
            <person name="Landt O."/>
            <person name="Louis E.J."/>
            <person name="Maarse A.C."/>
            <person name="Madania A."/>
            <person name="Mannhaupt G."/>
            <person name="Marck C."/>
            <person name="Martin R.P."/>
            <person name="Mewes H.-W."/>
            <person name="Michaux G."/>
            <person name="Paces V."/>
            <person name="Parle-McDermott A.G."/>
            <person name="Pearson B.M."/>
            <person name="Perrin A."/>
            <person name="Pettersson B."/>
            <person name="Poch O."/>
            <person name="Pohl T.M."/>
            <person name="Poirey R."/>
            <person name="Portetelle D."/>
            <person name="Pujol A."/>
            <person name="Purnelle B."/>
            <person name="Ramezani Rad M."/>
            <person name="Rechmann S."/>
            <person name="Schwager C."/>
            <person name="Schweizer M."/>
            <person name="Sor F."/>
            <person name="Sterky F."/>
            <person name="Tarassov I.A."/>
            <person name="Teodoru C."/>
            <person name="Tettelin H."/>
            <person name="Thierry A."/>
            <person name="Tobiasch E."/>
            <person name="Tzermia M."/>
            <person name="Uhlen M."/>
            <person name="Unseld M."/>
            <person name="Valens M."/>
            <person name="Vandenbol M."/>
            <person name="Vetter I."/>
            <person name="Vlcek C."/>
            <person name="Voet M."/>
            <person name="Volckaert G."/>
            <person name="Voss H."/>
            <person name="Wambutt R."/>
            <person name="Wedler H."/>
            <person name="Wiemann S."/>
            <person name="Winsor B."/>
            <person name="Wolfe K.H."/>
            <person name="Zollner A."/>
            <person name="Zumstein E."/>
            <person name="Kleine K."/>
        </authorList>
    </citation>
    <scope>NUCLEOTIDE SEQUENCE [LARGE SCALE GENOMIC DNA]</scope>
    <source>
        <strain>ATCC 204508 / S288c</strain>
    </source>
</reference>
<reference key="4">
    <citation type="journal article" date="2014" name="G3 (Bethesda)">
        <title>The reference genome sequence of Saccharomyces cerevisiae: Then and now.</title>
        <authorList>
            <person name="Engel S.R."/>
            <person name="Dietrich F.S."/>
            <person name="Fisk D.G."/>
            <person name="Binkley G."/>
            <person name="Balakrishnan R."/>
            <person name="Costanzo M.C."/>
            <person name="Dwight S.S."/>
            <person name="Hitz B.C."/>
            <person name="Karra K."/>
            <person name="Nash R.S."/>
            <person name="Weng S."/>
            <person name="Wong E.D."/>
            <person name="Lloyd P."/>
            <person name="Skrzypek M.S."/>
            <person name="Miyasato S.R."/>
            <person name="Simison M."/>
            <person name="Cherry J.M."/>
        </authorList>
    </citation>
    <scope>GENOME REANNOTATION</scope>
    <source>
        <strain>ATCC 204508 / S288c</strain>
    </source>
</reference>
<reference key="5">
    <citation type="journal article" date="1982" name="Biochemistry">
        <title>Isolation of seventeen proteins and amino-terminal amino acid sequences of eight proteins from cytoplasmic ribosomes of yeast.</title>
        <authorList>
            <person name="Otaka E."/>
            <person name="Higo K."/>
            <person name="Osawa S."/>
        </authorList>
    </citation>
    <scope>PROTEIN SEQUENCE OF 2-50</scope>
</reference>
<reference key="6">
    <citation type="journal article" date="1998" name="Yeast">
        <title>The list of cytoplasmic ribosomal proteins of Saccharomyces cerevisiae.</title>
        <authorList>
            <person name="Planta R.J."/>
            <person name="Mager W.H."/>
        </authorList>
    </citation>
    <scope>NOMENCLATURE</scope>
    <scope>SUBUNIT</scope>
</reference>
<reference key="7">
    <citation type="journal article" date="2003" name="Nature">
        <title>Global analysis of protein localization in budding yeast.</title>
        <authorList>
            <person name="Huh W.-K."/>
            <person name="Falvo J.V."/>
            <person name="Gerke L.C."/>
            <person name="Carroll A.S."/>
            <person name="Howson R.W."/>
            <person name="Weissman J.S."/>
            <person name="O'Shea E.K."/>
        </authorList>
    </citation>
    <scope>SUBCELLULAR LOCATION [LARGE SCALE ANALYSIS]</scope>
</reference>
<reference key="8">
    <citation type="journal article" date="2003" name="Nature">
        <title>Global analysis of protein expression in yeast.</title>
        <authorList>
            <person name="Ghaemmaghami S."/>
            <person name="Huh W.-K."/>
            <person name="Bower K."/>
            <person name="Howson R.W."/>
            <person name="Belle A."/>
            <person name="Dephoure N."/>
            <person name="O'Shea E.K."/>
            <person name="Weissman J.S."/>
        </authorList>
    </citation>
    <scope>LEVEL OF PROTEIN EXPRESSION [LARGE SCALE ANALYSIS]</scope>
</reference>
<reference key="9">
    <citation type="journal article" date="2005" name="J. Biol. Chem.">
        <title>Specific role for yeast homologs of the Diamond Blackfan anemia-associated Rps19 protein in ribosome synthesis.</title>
        <authorList>
            <person name="Leger-Silvestre I."/>
            <person name="Caffrey J.M."/>
            <person name="Dawaliby R."/>
            <person name="Alvarez-Arias D.A."/>
            <person name="Gas N."/>
            <person name="Bertolone S.J."/>
            <person name="Gleizes P.E."/>
            <person name="Ellis S.R."/>
        </authorList>
    </citation>
    <scope>FUNCTION IN RIBOSOME SYNTHESIS</scope>
    <scope>MUTAGENESIS OF ILE-65</scope>
    <scope>DISRUPTION PHENOTYPE</scope>
</reference>
<reference key="10">
    <citation type="journal article" date="2007" name="Nucleic Acids Res.">
        <title>Molecular basis of Diamond-Blackfan anemia: structure and function analysis of RPS19.</title>
        <authorList>
            <person name="Gregory L.A."/>
            <person name="Aguissa-Toure A.H."/>
            <person name="Pinaud N."/>
            <person name="Legrand P."/>
            <person name="Gleizes P.E."/>
            <person name="Fribourg S."/>
        </authorList>
    </citation>
    <scope>FUNCTION</scope>
    <scope>DISRUPTION PHENOTYPE</scope>
    <scope>MUTAGENESIS OF ILE-15; ARG-57; ARG-63; ILE-65; ARG-102 AND ARG-122</scope>
</reference>
<reference key="11">
    <citation type="journal article" date="2014" name="Curr. Opin. Struct. Biol.">
        <title>A new system for naming ribosomal proteins.</title>
        <authorList>
            <person name="Ban N."/>
            <person name="Beckmann R."/>
            <person name="Cate J.H.D."/>
            <person name="Dinman J.D."/>
            <person name="Dragon F."/>
            <person name="Ellis S.R."/>
            <person name="Lafontaine D.L.J."/>
            <person name="Lindahl L."/>
            <person name="Liljas A."/>
            <person name="Lipton J.M."/>
            <person name="McAlear M.A."/>
            <person name="Moore P.B."/>
            <person name="Noller H.F."/>
            <person name="Ortega J."/>
            <person name="Panse V.G."/>
            <person name="Ramakrishnan V."/>
            <person name="Spahn C.M.T."/>
            <person name="Steitz T.A."/>
            <person name="Tchorzewski M."/>
            <person name="Tollervey D."/>
            <person name="Warren A.J."/>
            <person name="Williamson J.R."/>
            <person name="Wilson D."/>
            <person name="Yonath A."/>
            <person name="Yusupov M."/>
        </authorList>
    </citation>
    <scope>NOMENCLATURE</scope>
</reference>
<reference key="12">
    <citation type="journal article" date="2010" name="Science">
        <title>Crystal structure of the eukaryotic ribosome.</title>
        <authorList>
            <person name="Ben-Shem A."/>
            <person name="Jenner L."/>
            <person name="Yusupova G."/>
            <person name="Yusupov M."/>
        </authorList>
    </citation>
    <scope>X-RAY CRYSTALLOGRAPHY (4.00 ANGSTROMS) OF 80S RIBOSOME</scope>
</reference>
<reference key="13">
    <citation type="journal article" date="2011" name="Science">
        <title>The structure of the eukaryotic ribosome at 3.0 A resolution.</title>
        <authorList>
            <person name="Ben-Shem A."/>
            <person name="Garreau de Loubresse N."/>
            <person name="Melnikov S."/>
            <person name="Jenner L."/>
            <person name="Yusupova G."/>
            <person name="Yusupov M."/>
        </authorList>
    </citation>
    <scope>X-RAY CRYSTALLOGRAPHY (3.00 ANGSTROMS) OF 80S RIBOSOME</scope>
    <scope>SUBUNIT</scope>
    <scope>SUBCELLULAR LOCATION</scope>
</reference>
<organism>
    <name type="scientific">Saccharomyces cerevisiae (strain ATCC 204508 / S288c)</name>
    <name type="common">Baker's yeast</name>
    <dbReference type="NCBI Taxonomy" id="559292"/>
    <lineage>
        <taxon>Eukaryota</taxon>
        <taxon>Fungi</taxon>
        <taxon>Dikarya</taxon>
        <taxon>Ascomycota</taxon>
        <taxon>Saccharomycotina</taxon>
        <taxon>Saccharomycetes</taxon>
        <taxon>Saccharomycetales</taxon>
        <taxon>Saccharomycetaceae</taxon>
        <taxon>Saccharomyces</taxon>
    </lineage>
</organism>